<protein>
    <recommendedName>
        <fullName evidence="1">Lon protease</fullName>
        <ecNumber evidence="1">3.4.21.53</ecNumber>
    </recommendedName>
    <alternativeName>
        <fullName evidence="1">ATP-dependent protease La</fullName>
    </alternativeName>
</protein>
<gene>
    <name evidence="1" type="primary">lon</name>
    <name type="ordered locus">Bphyt_5717</name>
</gene>
<sequence>MSADSENETSESSPAGEATASTSALPDEPLILLPVRNAVLFPGMVLPFTAGRGQVKEDVQAAVKRQQPLGVVLQRDPRVQDPTFDDLNTIGTVANVVRYVTSPEDGAHHLICQGVERFRLIAPVEGLGFRAARVEFLPETTARNPAVDARALVLRQRAGEMIGLLPNAGGELVRALDAIELPGLLADTIAGLLDIPPERKQEILETLDVCKRLDKVLDAVAGRIEVLRLSQEIGEQTRGRIDQRQREMMLREQLRTIQNELGENIESREEVRKLTEAIEAAHMPPEVESHARKELGRLERMPEASSEYSISVSYLEWLTELPWPLPAEAPIDIARARQILDEAHFGLDKVKRRILEYLGVRKLNPHGKAPILCFLGPPGVGKTSLGQSIARALERPFVRVSLGGVHDEAEIRGHRRTYIGAMPGNIIQAIRKAGARNCVMLLDELDKLGQGVHGDPAAAMLEVLDPEQNASFRDNYLGVPFDLSAIVFVATANQIEGIAGPLRDRMEILDLPGYTEAEKFQIAQRFLVPRQLEACGLTAAQCELPDETLRAIIRDYTREAGVRSLERQIGAVFRYVALRVAEDPSTHERIEPDRLSSILGHRRFESEVAMRTSLPGVVTGLAWTPVGGDLLFIEASSTPGGGRLVLTGQLGDVMKESVQAALTLVKSRCESLHIDCSNFDKRDIHVHVPAGAVPKDGPSAGVAMFIAIASLLMGRAVRSDCAVTGEISLRGIVLPVGGIKEKVLAALRGGIKTVLLPARNAPDLEDIPVDARNQMRFVLLETVDDAVREIIEDESVTSSRNVDI</sequence>
<feature type="chain" id="PRO_0000396540" description="Lon protease">
    <location>
        <begin position="1"/>
        <end position="804"/>
    </location>
</feature>
<feature type="domain" description="Lon N-terminal" evidence="3">
    <location>
        <begin position="30"/>
        <end position="224"/>
    </location>
</feature>
<feature type="domain" description="Lon proteolytic" evidence="2">
    <location>
        <begin position="612"/>
        <end position="793"/>
    </location>
</feature>
<feature type="region of interest" description="Disordered" evidence="4">
    <location>
        <begin position="1"/>
        <end position="23"/>
    </location>
</feature>
<feature type="active site" evidence="1">
    <location>
        <position position="699"/>
    </location>
</feature>
<feature type="active site" evidence="1">
    <location>
        <position position="742"/>
    </location>
</feature>
<feature type="binding site" evidence="1">
    <location>
        <begin position="376"/>
        <end position="383"/>
    </location>
    <ligand>
        <name>ATP</name>
        <dbReference type="ChEBI" id="CHEBI:30616"/>
    </ligand>
</feature>
<organism>
    <name type="scientific">Paraburkholderia phytofirmans (strain DSM 17436 / LMG 22146 / PsJN)</name>
    <name type="common">Burkholderia phytofirmans</name>
    <dbReference type="NCBI Taxonomy" id="398527"/>
    <lineage>
        <taxon>Bacteria</taxon>
        <taxon>Pseudomonadati</taxon>
        <taxon>Pseudomonadota</taxon>
        <taxon>Betaproteobacteria</taxon>
        <taxon>Burkholderiales</taxon>
        <taxon>Burkholderiaceae</taxon>
        <taxon>Paraburkholderia</taxon>
    </lineage>
</organism>
<reference key="1">
    <citation type="journal article" date="2011" name="J. Bacteriol.">
        <title>Complete genome sequence of the plant growth-promoting endophyte Burkholderia phytofirmans strain PsJN.</title>
        <authorList>
            <person name="Weilharter A."/>
            <person name="Mitter B."/>
            <person name="Shin M.V."/>
            <person name="Chain P.S."/>
            <person name="Nowak J."/>
            <person name="Sessitsch A."/>
        </authorList>
    </citation>
    <scope>NUCLEOTIDE SEQUENCE [LARGE SCALE GENOMIC DNA]</scope>
    <source>
        <strain>DSM 17436 / LMG 22146 / PsJN</strain>
    </source>
</reference>
<comment type="function">
    <text evidence="1">ATP-dependent serine protease that mediates the selective degradation of mutant and abnormal proteins as well as certain short-lived regulatory proteins. Required for cellular homeostasis and for survival from DNA damage and developmental changes induced by stress. Degrades polypeptides processively to yield small peptide fragments that are 5 to 10 amino acids long. Binds to DNA in a double-stranded, site-specific manner.</text>
</comment>
<comment type="catalytic activity">
    <reaction evidence="1">
        <text>Hydrolysis of proteins in presence of ATP.</text>
        <dbReference type="EC" id="3.4.21.53"/>
    </reaction>
</comment>
<comment type="subunit">
    <text evidence="1">Homohexamer. Organized in a ring with a central cavity.</text>
</comment>
<comment type="subcellular location">
    <subcellularLocation>
        <location evidence="1">Cytoplasm</location>
    </subcellularLocation>
</comment>
<comment type="induction">
    <text evidence="1">By heat shock.</text>
</comment>
<comment type="similarity">
    <text evidence="1">Belongs to the peptidase S16 family.</text>
</comment>
<accession>B2TFQ5</accession>
<dbReference type="EC" id="3.4.21.53" evidence="1"/>
<dbReference type="EMBL" id="CP001053">
    <property type="protein sequence ID" value="ACD20063.1"/>
    <property type="molecule type" value="Genomic_DNA"/>
</dbReference>
<dbReference type="RefSeq" id="WP_012427571.1">
    <property type="nucleotide sequence ID" value="NC_010676.1"/>
</dbReference>
<dbReference type="SMR" id="B2TFQ5"/>
<dbReference type="STRING" id="398527.Bphyt_5717"/>
<dbReference type="KEGG" id="bpy:Bphyt_5717"/>
<dbReference type="eggNOG" id="COG0466">
    <property type="taxonomic scope" value="Bacteria"/>
</dbReference>
<dbReference type="HOGENOM" id="CLU_004109_4_3_4"/>
<dbReference type="OrthoDB" id="9803599at2"/>
<dbReference type="Proteomes" id="UP000001739">
    <property type="component" value="Chromosome 2"/>
</dbReference>
<dbReference type="GO" id="GO:0005737">
    <property type="term" value="C:cytoplasm"/>
    <property type="evidence" value="ECO:0007669"/>
    <property type="project" value="UniProtKB-SubCell"/>
</dbReference>
<dbReference type="GO" id="GO:0005524">
    <property type="term" value="F:ATP binding"/>
    <property type="evidence" value="ECO:0007669"/>
    <property type="project" value="UniProtKB-UniRule"/>
</dbReference>
<dbReference type="GO" id="GO:0016887">
    <property type="term" value="F:ATP hydrolysis activity"/>
    <property type="evidence" value="ECO:0007669"/>
    <property type="project" value="UniProtKB-UniRule"/>
</dbReference>
<dbReference type="GO" id="GO:0004176">
    <property type="term" value="F:ATP-dependent peptidase activity"/>
    <property type="evidence" value="ECO:0007669"/>
    <property type="project" value="UniProtKB-UniRule"/>
</dbReference>
<dbReference type="GO" id="GO:0043565">
    <property type="term" value="F:sequence-specific DNA binding"/>
    <property type="evidence" value="ECO:0007669"/>
    <property type="project" value="UniProtKB-UniRule"/>
</dbReference>
<dbReference type="GO" id="GO:0004252">
    <property type="term" value="F:serine-type endopeptidase activity"/>
    <property type="evidence" value="ECO:0007669"/>
    <property type="project" value="UniProtKB-UniRule"/>
</dbReference>
<dbReference type="GO" id="GO:0034605">
    <property type="term" value="P:cellular response to heat"/>
    <property type="evidence" value="ECO:0007669"/>
    <property type="project" value="UniProtKB-UniRule"/>
</dbReference>
<dbReference type="GO" id="GO:0006515">
    <property type="term" value="P:protein quality control for misfolded or incompletely synthesized proteins"/>
    <property type="evidence" value="ECO:0007669"/>
    <property type="project" value="UniProtKB-UniRule"/>
</dbReference>
<dbReference type="CDD" id="cd19500">
    <property type="entry name" value="RecA-like_Lon"/>
    <property type="match status" value="1"/>
</dbReference>
<dbReference type="FunFam" id="1.20.5.5270:FF:000002">
    <property type="entry name" value="Lon protease homolog"/>
    <property type="match status" value="1"/>
</dbReference>
<dbReference type="FunFam" id="3.40.50.300:FF:000021">
    <property type="entry name" value="Lon protease homolog"/>
    <property type="match status" value="1"/>
</dbReference>
<dbReference type="Gene3D" id="1.10.8.60">
    <property type="match status" value="1"/>
</dbReference>
<dbReference type="Gene3D" id="1.20.5.5270">
    <property type="match status" value="1"/>
</dbReference>
<dbReference type="Gene3D" id="1.20.58.1480">
    <property type="match status" value="1"/>
</dbReference>
<dbReference type="Gene3D" id="3.30.230.10">
    <property type="match status" value="1"/>
</dbReference>
<dbReference type="Gene3D" id="2.30.130.40">
    <property type="entry name" value="LON domain-like"/>
    <property type="match status" value="1"/>
</dbReference>
<dbReference type="Gene3D" id="3.40.50.300">
    <property type="entry name" value="P-loop containing nucleotide triphosphate hydrolases"/>
    <property type="match status" value="1"/>
</dbReference>
<dbReference type="HAMAP" id="MF_01973">
    <property type="entry name" value="lon_bact"/>
    <property type="match status" value="1"/>
</dbReference>
<dbReference type="InterPro" id="IPR003593">
    <property type="entry name" value="AAA+_ATPase"/>
</dbReference>
<dbReference type="InterPro" id="IPR003959">
    <property type="entry name" value="ATPase_AAA_core"/>
</dbReference>
<dbReference type="InterPro" id="IPR027543">
    <property type="entry name" value="Lon_bac"/>
</dbReference>
<dbReference type="InterPro" id="IPR004815">
    <property type="entry name" value="Lon_bac/euk-typ"/>
</dbReference>
<dbReference type="InterPro" id="IPR054594">
    <property type="entry name" value="Lon_lid"/>
</dbReference>
<dbReference type="InterPro" id="IPR008269">
    <property type="entry name" value="Lon_proteolytic"/>
</dbReference>
<dbReference type="InterPro" id="IPR027065">
    <property type="entry name" value="Lon_Prtase"/>
</dbReference>
<dbReference type="InterPro" id="IPR003111">
    <property type="entry name" value="Lon_prtase_N"/>
</dbReference>
<dbReference type="InterPro" id="IPR046336">
    <property type="entry name" value="Lon_prtase_N_sf"/>
</dbReference>
<dbReference type="InterPro" id="IPR027417">
    <property type="entry name" value="P-loop_NTPase"/>
</dbReference>
<dbReference type="InterPro" id="IPR008268">
    <property type="entry name" value="Peptidase_S16_AS"/>
</dbReference>
<dbReference type="InterPro" id="IPR015947">
    <property type="entry name" value="PUA-like_sf"/>
</dbReference>
<dbReference type="InterPro" id="IPR020568">
    <property type="entry name" value="Ribosomal_Su5_D2-typ_SF"/>
</dbReference>
<dbReference type="InterPro" id="IPR014721">
    <property type="entry name" value="Ribsml_uS5_D2-typ_fold_subgr"/>
</dbReference>
<dbReference type="NCBIfam" id="TIGR00763">
    <property type="entry name" value="lon"/>
    <property type="match status" value="1"/>
</dbReference>
<dbReference type="PANTHER" id="PTHR10046">
    <property type="entry name" value="ATP DEPENDENT LON PROTEASE FAMILY MEMBER"/>
    <property type="match status" value="1"/>
</dbReference>
<dbReference type="Pfam" id="PF00004">
    <property type="entry name" value="AAA"/>
    <property type="match status" value="1"/>
</dbReference>
<dbReference type="Pfam" id="PF05362">
    <property type="entry name" value="Lon_C"/>
    <property type="match status" value="1"/>
</dbReference>
<dbReference type="Pfam" id="PF22667">
    <property type="entry name" value="Lon_lid"/>
    <property type="match status" value="1"/>
</dbReference>
<dbReference type="Pfam" id="PF02190">
    <property type="entry name" value="LON_substr_bdg"/>
    <property type="match status" value="1"/>
</dbReference>
<dbReference type="PIRSF" id="PIRSF001174">
    <property type="entry name" value="Lon_proteas"/>
    <property type="match status" value="1"/>
</dbReference>
<dbReference type="PRINTS" id="PR00830">
    <property type="entry name" value="ENDOLAPTASE"/>
</dbReference>
<dbReference type="SMART" id="SM00382">
    <property type="entry name" value="AAA"/>
    <property type="match status" value="1"/>
</dbReference>
<dbReference type="SMART" id="SM00464">
    <property type="entry name" value="LON"/>
    <property type="match status" value="1"/>
</dbReference>
<dbReference type="SUPFAM" id="SSF52540">
    <property type="entry name" value="P-loop containing nucleoside triphosphate hydrolases"/>
    <property type="match status" value="1"/>
</dbReference>
<dbReference type="SUPFAM" id="SSF88697">
    <property type="entry name" value="PUA domain-like"/>
    <property type="match status" value="1"/>
</dbReference>
<dbReference type="SUPFAM" id="SSF54211">
    <property type="entry name" value="Ribosomal protein S5 domain 2-like"/>
    <property type="match status" value="1"/>
</dbReference>
<dbReference type="PROSITE" id="PS51787">
    <property type="entry name" value="LON_N"/>
    <property type="match status" value="1"/>
</dbReference>
<dbReference type="PROSITE" id="PS51786">
    <property type="entry name" value="LON_PROTEOLYTIC"/>
    <property type="match status" value="1"/>
</dbReference>
<dbReference type="PROSITE" id="PS01046">
    <property type="entry name" value="LON_SER"/>
    <property type="match status" value="1"/>
</dbReference>
<evidence type="ECO:0000255" key="1">
    <source>
        <dbReference type="HAMAP-Rule" id="MF_01973"/>
    </source>
</evidence>
<evidence type="ECO:0000255" key="2">
    <source>
        <dbReference type="PROSITE-ProRule" id="PRU01122"/>
    </source>
</evidence>
<evidence type="ECO:0000255" key="3">
    <source>
        <dbReference type="PROSITE-ProRule" id="PRU01123"/>
    </source>
</evidence>
<evidence type="ECO:0000256" key="4">
    <source>
        <dbReference type="SAM" id="MobiDB-lite"/>
    </source>
</evidence>
<name>LON_PARPJ</name>
<keyword id="KW-0067">ATP-binding</keyword>
<keyword id="KW-0963">Cytoplasm</keyword>
<keyword id="KW-0378">Hydrolase</keyword>
<keyword id="KW-0547">Nucleotide-binding</keyword>
<keyword id="KW-0645">Protease</keyword>
<keyword id="KW-0720">Serine protease</keyword>
<keyword id="KW-0346">Stress response</keyword>
<proteinExistence type="inferred from homology"/>